<evidence type="ECO:0000250" key="1"/>
<evidence type="ECO:0000250" key="2">
    <source>
        <dbReference type="UniProtKB" id="Q9UKA1"/>
    </source>
</evidence>
<evidence type="ECO:0000255" key="3">
    <source>
        <dbReference type="PROSITE-ProRule" id="PRU00080"/>
    </source>
</evidence>
<name>FBXL5_BOVIN</name>
<reference key="1">
    <citation type="submission" date="2007-02" db="EMBL/GenBank/DDBJ databases">
        <authorList>
            <consortium name="NIH - Mammalian Gene Collection (MGC) project"/>
        </authorList>
    </citation>
    <scope>NUCLEOTIDE SEQUENCE [LARGE SCALE MRNA]</scope>
    <source>
        <strain>Hereford</strain>
        <tissue>Fetal lung</tissue>
    </source>
</reference>
<dbReference type="EMBL" id="BC133613">
    <property type="protein sequence ID" value="AAI33614.1"/>
    <property type="molecule type" value="mRNA"/>
</dbReference>
<dbReference type="RefSeq" id="NP_001075909.1">
    <property type="nucleotide sequence ID" value="NM_001082440.1"/>
</dbReference>
<dbReference type="SMR" id="A2VE78"/>
<dbReference type="FunCoup" id="A2VE78">
    <property type="interactions" value="1493"/>
</dbReference>
<dbReference type="STRING" id="9913.ENSBTAP00000028266"/>
<dbReference type="PaxDb" id="9913-ENSBTAP00000028266"/>
<dbReference type="GeneID" id="519695"/>
<dbReference type="KEGG" id="bta:519695"/>
<dbReference type="CTD" id="26234"/>
<dbReference type="VEuPathDB" id="HostDB:ENSBTAG00000021214"/>
<dbReference type="eggNOG" id="ENOG502QS5I">
    <property type="taxonomic scope" value="Eukaryota"/>
</dbReference>
<dbReference type="InParanoid" id="A2VE78"/>
<dbReference type="OMA" id="GEMFCGH"/>
<dbReference type="OrthoDB" id="10257471at2759"/>
<dbReference type="Reactome" id="R-BTA-8951664">
    <property type="pathway name" value="Neddylation"/>
</dbReference>
<dbReference type="Reactome" id="R-BTA-917937">
    <property type="pathway name" value="Iron uptake and transport"/>
</dbReference>
<dbReference type="Reactome" id="R-BTA-983168">
    <property type="pathway name" value="Antigen processing: Ubiquitination &amp; Proteasome degradation"/>
</dbReference>
<dbReference type="UniPathway" id="UPA00143"/>
<dbReference type="Proteomes" id="UP000009136">
    <property type="component" value="Chromosome 6"/>
</dbReference>
<dbReference type="Bgee" id="ENSBTAG00000021214">
    <property type="expression patterns" value="Expressed in neutrophil and 103 other cell types or tissues"/>
</dbReference>
<dbReference type="GO" id="GO:0005634">
    <property type="term" value="C:nucleus"/>
    <property type="evidence" value="ECO:0007669"/>
    <property type="project" value="UniProtKB-SubCell"/>
</dbReference>
<dbReference type="GO" id="GO:0048471">
    <property type="term" value="C:perinuclear region of cytoplasm"/>
    <property type="evidence" value="ECO:0000250"/>
    <property type="project" value="UniProtKB"/>
</dbReference>
<dbReference type="GO" id="GO:0019005">
    <property type="term" value="C:SCF ubiquitin ligase complex"/>
    <property type="evidence" value="ECO:0000250"/>
    <property type="project" value="UniProtKB"/>
</dbReference>
<dbReference type="GO" id="GO:0005506">
    <property type="term" value="F:iron ion binding"/>
    <property type="evidence" value="ECO:0000250"/>
    <property type="project" value="UniProtKB"/>
</dbReference>
<dbReference type="GO" id="GO:0051536">
    <property type="term" value="F:iron-sulfur cluster binding"/>
    <property type="evidence" value="ECO:0007669"/>
    <property type="project" value="UniProtKB-KW"/>
</dbReference>
<dbReference type="GO" id="GO:0006879">
    <property type="term" value="P:intracellular iron ion homeostasis"/>
    <property type="evidence" value="ECO:0000250"/>
    <property type="project" value="UniProtKB"/>
</dbReference>
<dbReference type="GO" id="GO:0016567">
    <property type="term" value="P:protein ubiquitination"/>
    <property type="evidence" value="ECO:0000250"/>
    <property type="project" value="UniProtKB"/>
</dbReference>
<dbReference type="GO" id="GO:0031146">
    <property type="term" value="P:SCF-dependent proteasomal ubiquitin-dependent protein catabolic process"/>
    <property type="evidence" value="ECO:0000250"/>
    <property type="project" value="UniProtKB"/>
</dbReference>
<dbReference type="CDD" id="cd22118">
    <property type="entry name" value="F-box_FBXL5"/>
    <property type="match status" value="1"/>
</dbReference>
<dbReference type="CDD" id="cd12109">
    <property type="entry name" value="Hr_FBXL5"/>
    <property type="match status" value="1"/>
</dbReference>
<dbReference type="FunFam" id="1.20.1280.50:FF:000007">
    <property type="entry name" value="F-box/LRR-repeat protein 5 isoform X1"/>
    <property type="match status" value="1"/>
</dbReference>
<dbReference type="FunFam" id="3.80.10.10:FF:000086">
    <property type="entry name" value="F-box/LRR-repeat protein 5 isoform X1"/>
    <property type="match status" value="1"/>
</dbReference>
<dbReference type="FunFam" id="3.80.10.10:FF:000106">
    <property type="entry name" value="F-box/LRR-repeat protein 5 isoform X1"/>
    <property type="match status" value="1"/>
</dbReference>
<dbReference type="FunFam" id="1.20.120.520:FF:000002">
    <property type="entry name" value="F-box/LRR-repeat protein 5 isoform X2"/>
    <property type="match status" value="1"/>
</dbReference>
<dbReference type="Gene3D" id="1.20.1280.50">
    <property type="match status" value="1"/>
</dbReference>
<dbReference type="Gene3D" id="1.20.120.520">
    <property type="entry name" value="nmb1532 protein domain like"/>
    <property type="match status" value="1"/>
</dbReference>
<dbReference type="Gene3D" id="3.80.10.10">
    <property type="entry name" value="Ribonuclease Inhibitor"/>
    <property type="match status" value="2"/>
</dbReference>
<dbReference type="InterPro" id="IPR036047">
    <property type="entry name" value="F-box-like_dom_sf"/>
</dbReference>
<dbReference type="InterPro" id="IPR001810">
    <property type="entry name" value="F-box_dom"/>
</dbReference>
<dbReference type="InterPro" id="IPR012312">
    <property type="entry name" value="Hemerythrin-like"/>
</dbReference>
<dbReference type="InterPro" id="IPR045808">
    <property type="entry name" value="Hr_FBXL5"/>
</dbReference>
<dbReference type="InterPro" id="IPR001611">
    <property type="entry name" value="Leu-rich_rpt"/>
</dbReference>
<dbReference type="InterPro" id="IPR006553">
    <property type="entry name" value="Leu-rich_rpt_Cys-con_subtyp"/>
</dbReference>
<dbReference type="InterPro" id="IPR032675">
    <property type="entry name" value="LRR_dom_sf"/>
</dbReference>
<dbReference type="PANTHER" id="PTHR13318:SF19">
    <property type="entry name" value="F-BOX_LRR-REPEAT PROTEIN 5"/>
    <property type="match status" value="1"/>
</dbReference>
<dbReference type="PANTHER" id="PTHR13318">
    <property type="entry name" value="PARTNER OF PAIRED, ISOFORM B-RELATED"/>
    <property type="match status" value="1"/>
</dbReference>
<dbReference type="Pfam" id="PF12937">
    <property type="entry name" value="F-box-like"/>
    <property type="match status" value="1"/>
</dbReference>
<dbReference type="Pfam" id="PF01814">
    <property type="entry name" value="Hemerythrin"/>
    <property type="match status" value="1"/>
</dbReference>
<dbReference type="Pfam" id="PF13516">
    <property type="entry name" value="LRR_6"/>
    <property type="match status" value="2"/>
</dbReference>
<dbReference type="SMART" id="SM00256">
    <property type="entry name" value="FBOX"/>
    <property type="match status" value="1"/>
</dbReference>
<dbReference type="SMART" id="SM00367">
    <property type="entry name" value="LRR_CC"/>
    <property type="match status" value="4"/>
</dbReference>
<dbReference type="SUPFAM" id="SSF81383">
    <property type="entry name" value="F-box domain"/>
    <property type="match status" value="1"/>
</dbReference>
<dbReference type="SUPFAM" id="SSF52047">
    <property type="entry name" value="RNI-like"/>
    <property type="match status" value="1"/>
</dbReference>
<dbReference type="PROSITE" id="PS50181">
    <property type="entry name" value="FBOX"/>
    <property type="match status" value="1"/>
</dbReference>
<organism>
    <name type="scientific">Bos taurus</name>
    <name type="common">Bovine</name>
    <dbReference type="NCBI Taxonomy" id="9913"/>
    <lineage>
        <taxon>Eukaryota</taxon>
        <taxon>Metazoa</taxon>
        <taxon>Chordata</taxon>
        <taxon>Craniata</taxon>
        <taxon>Vertebrata</taxon>
        <taxon>Euteleostomi</taxon>
        <taxon>Mammalia</taxon>
        <taxon>Eutheria</taxon>
        <taxon>Laurasiatheria</taxon>
        <taxon>Artiodactyla</taxon>
        <taxon>Ruminantia</taxon>
        <taxon>Pecora</taxon>
        <taxon>Bovidae</taxon>
        <taxon>Bovinae</taxon>
        <taxon>Bos</taxon>
    </lineage>
</organism>
<accession>A2VE78</accession>
<keyword id="KW-0963">Cytoplasm</keyword>
<keyword id="KW-0408">Iron</keyword>
<keyword id="KW-0411">Iron-sulfur</keyword>
<keyword id="KW-0433">Leucine-rich repeat</keyword>
<keyword id="KW-0479">Metal-binding</keyword>
<keyword id="KW-0539">Nucleus</keyword>
<keyword id="KW-1185">Reference proteome</keyword>
<keyword id="KW-0677">Repeat</keyword>
<keyword id="KW-0832">Ubl conjugation</keyword>
<keyword id="KW-0833">Ubl conjugation pathway</keyword>
<proteinExistence type="evidence at transcript level"/>
<protein>
    <recommendedName>
        <fullName>F-box/LRR-repeat protein 5</fullName>
    </recommendedName>
    <alternativeName>
        <fullName>F-box and leucine-rich repeat protein 5</fullName>
    </alternativeName>
</protein>
<sequence length="691" mass="78412">MAPFPEEVDVFTAPHWRMKQLVGLYCDKLSKTNFSNNNDFRALLQSLYATFKEFKMHEQIENEYIIGLLQQRSQTIYNVHSDNKLSEMLSLFEKGLKNVKNEYEQLNYAKQLKERLEAFTKDFLPHMKEEEEVFQPMLMEYFTYEELKDIKKKVIAQHCSQKDTAELLRGLSLWNQAEERQKFFKYSVDEKSDKEAEVSEQSTGITHLPPEVMVSIFSYLNPQELCRCSQVSTKWSQLAKTGSLWKHLYPVHWARGDWYSGPAAELDTEPDEEWVKSRRDESRAFQEWDEDADIDESEESGEESIAISIAQMEKRLLHGLIHNVLPYVGTSVKTLVLAYSSAVSSKMVRQILELCPNLEHLDLTQTDISDSAFDSWSWLGCCQSLRHLDLSGCEKITDVALEKISRALGILTTHESGLLKTSTSKVTSTTWKNKDITMQSFKQSACLHDVTNKDIGEEVDNEHPWTKPISSDDFTSPYVWMLDAEDLADIEDAVEWRHRNVESLCVMETASNFSCPSSACYSKDIVGLRTSVCWQQHCASPAFAYCGHSYCCTGTALRTMSALPESSALCRKAPRTRLLREKDLIYSGSEKSDQETGRVLLFLSLSGCYQITDHGLRVLTLGGGLPYLEHLNLSGCLTVTGAGLQDLVSACPSLNDEYFYYCDNINGPHADTASGCQNLQCGFRACCRSGE</sequence>
<comment type="function">
    <text evidence="2">Component of some SCF (SKP1-cullin-F-box) protein ligase complex that plays a central role in iron homeostasis by promoting the ubiquitination and subsequent degradation of IREB2/IRP2. The C-terminal domain of FBXL5 contains a redox-sensitive [2Fe-2S] cluster that, upon oxidation, promotes binding to IRP2 to effect its oxygen-dependent degradation. Under iron deficiency conditions, the N-terminal hemerythrin-like (Hr) region, which contains a diiron metal center, cannot bind iron and undergoes conformational changes that destabilize the FBXL5 protein and cause its ubiquitination and degradation. When intracellular iron levels start rising, the Hr region is stabilized. Additional increases in iron levels facilitate the assembly and incorporation of a redox active [2Fe-2S] cluster in the C-terminal domain. Only when oxygen level is high enough to maintain the cluster in its oxidized state can FBXL5 recruit IRP2 as a substrate for polyubiquination and degradation. Promotes ubiquitination and subsequent degradation of the dynactin complex component DCTN1. Within the nucleus, promotes the ubiquitination of SNAI1; preventing its interaction with DNA and promoting its degradation. Negatively regulates DNA damage response by mediating the ubiquitin-proteasome degradation of the DNA repair protein NABP2.</text>
</comment>
<comment type="cofactor">
    <cofactor evidence="2">
        <name>[2Fe-2S] cluster</name>
        <dbReference type="ChEBI" id="CHEBI:190135"/>
    </cofactor>
</comment>
<comment type="activity regulation">
    <text evidence="2">An iron-sulfur cluster promotes IRP2 polyubiquitination and degradation in response to both iron and oxygen concentrations.</text>
</comment>
<comment type="pathway">
    <text>Protein modification; protein ubiquitination.</text>
</comment>
<comment type="subunit">
    <text evidence="2">Part of a SCF (SKP1-cullin-F-box) protein ligase complex. Interacts with ACO1/IRP1, IREB2/IRP2; the interaction depends on the [2Fe-2S] cluster. Interacts with DCTN1/p150-glued.</text>
</comment>
<comment type="subcellular location">
    <subcellularLocation>
        <location evidence="2">Cytoplasm</location>
        <location evidence="2">Perinuclear region</location>
    </subcellularLocation>
    <subcellularLocation>
        <location evidence="2">Nucleus</location>
    </subcellularLocation>
</comment>
<comment type="domain">
    <text evidence="1">The hemerythrin-like region acts as an oxygen and iron sensor by binding oxygen through a diiron metal-center. In absence of oxygen and iron, the protein is ubiquitinated and degraded (By similarity).</text>
</comment>
<comment type="PTM">
    <text evidence="2">Polybiquitinated upon iron and oxygen depletion, leading to its degradation by the proteasome. Ubiquitination is regulated by the hemerythrin-like region that acts as an oxygen and iron sensor. Undergoes constitutive ubiquitin-dependent degradation at the steady state by HERC2.</text>
</comment>
<feature type="chain" id="PRO_0000390464" description="F-box/LRR-repeat protein 5">
    <location>
        <begin position="1"/>
        <end position="691"/>
    </location>
</feature>
<feature type="domain" description="F-box" evidence="3">
    <location>
        <begin position="202"/>
        <end position="248"/>
    </location>
</feature>
<feature type="repeat" description="LRR 1">
    <location>
        <begin position="340"/>
        <end position="364"/>
    </location>
</feature>
<feature type="repeat" description="LRR 2">
    <location>
        <begin position="365"/>
        <end position="392"/>
    </location>
</feature>
<feature type="repeat" description="LRR 3">
    <location>
        <begin position="393"/>
        <end position="418"/>
    </location>
</feature>
<feature type="repeat" description="LRR 4">
    <location>
        <begin position="479"/>
        <end position="508"/>
    </location>
</feature>
<feature type="repeat" description="LRR 5">
    <location>
        <begin position="576"/>
        <end position="607"/>
    </location>
</feature>
<feature type="repeat" description="LRR 6">
    <location>
        <begin position="608"/>
        <end position="635"/>
    </location>
</feature>
<feature type="repeat" description="LRR 7">
    <location>
        <begin position="636"/>
        <end position="661"/>
    </location>
</feature>
<feature type="region of interest" description="Hemerythrin-like" evidence="2">
    <location>
        <begin position="1"/>
        <end position="159"/>
    </location>
</feature>
<feature type="binding site" evidence="2">
    <location>
        <position position="15"/>
    </location>
    <ligand>
        <name>Fe(3+)</name>
        <dbReference type="ChEBI" id="CHEBI:29034"/>
        <label>1</label>
    </ligand>
</feature>
<feature type="binding site" evidence="2">
    <location>
        <position position="57"/>
    </location>
    <ligand>
        <name>Fe(3+)</name>
        <dbReference type="ChEBI" id="CHEBI:29034"/>
        <label>1</label>
    </ligand>
</feature>
<feature type="binding site" evidence="2">
    <location>
        <position position="58"/>
    </location>
    <ligand>
        <name>Fe(3+)</name>
        <dbReference type="ChEBI" id="CHEBI:29034"/>
        <label>2</label>
    </ligand>
</feature>
<feature type="binding site" evidence="2">
    <location>
        <position position="61"/>
    </location>
    <ligand>
        <name>Fe(3+)</name>
        <dbReference type="ChEBI" id="CHEBI:29034"/>
        <label>1</label>
    </ligand>
</feature>
<feature type="binding site" evidence="2">
    <location>
        <position position="61"/>
    </location>
    <ligand>
        <name>Fe(3+)</name>
        <dbReference type="ChEBI" id="CHEBI:29034"/>
        <label>2</label>
    </ligand>
</feature>
<feature type="binding site" evidence="2">
    <location>
        <position position="80"/>
    </location>
    <ligand>
        <name>Fe(3+)</name>
        <dbReference type="ChEBI" id="CHEBI:29034"/>
        <label>2</label>
    </ligand>
</feature>
<feature type="binding site" evidence="2">
    <location>
        <position position="126"/>
    </location>
    <ligand>
        <name>Fe(3+)</name>
        <dbReference type="ChEBI" id="CHEBI:29034"/>
        <label>2</label>
    </ligand>
</feature>
<feature type="binding site" evidence="2">
    <location>
        <position position="130"/>
    </location>
    <ligand>
        <name>Fe(3+)</name>
        <dbReference type="ChEBI" id="CHEBI:29034"/>
        <label>1</label>
    </ligand>
</feature>
<feature type="binding site" evidence="2">
    <location>
        <position position="130"/>
    </location>
    <ligand>
        <name>Fe(3+)</name>
        <dbReference type="ChEBI" id="CHEBI:29034"/>
        <label>2</label>
    </ligand>
</feature>
<feature type="binding site" evidence="2">
    <location>
        <position position="662"/>
    </location>
    <ligand>
        <name>[2Fe-2S] cluster</name>
        <dbReference type="ChEBI" id="CHEBI:190135"/>
    </ligand>
</feature>
<feature type="binding site" evidence="2">
    <location>
        <position position="676"/>
    </location>
    <ligand>
        <name>[2Fe-2S] cluster</name>
        <dbReference type="ChEBI" id="CHEBI:190135"/>
    </ligand>
</feature>
<feature type="binding site" evidence="2">
    <location>
        <position position="686"/>
    </location>
    <ligand>
        <name>[2Fe-2S] cluster</name>
        <dbReference type="ChEBI" id="CHEBI:190135"/>
    </ligand>
</feature>
<feature type="binding site" evidence="2">
    <location>
        <position position="687"/>
    </location>
    <ligand>
        <name>[2Fe-2S] cluster</name>
        <dbReference type="ChEBI" id="CHEBI:190135"/>
    </ligand>
</feature>
<gene>
    <name type="primary">FBXL5</name>
</gene>